<geneLocation type="chloroplast"/>
<gene>
    <name evidence="1" type="primary">clpP</name>
</gene>
<proteinExistence type="inferred from homology"/>
<reference key="1">
    <citation type="submission" date="2007-03" db="EMBL/GenBank/DDBJ databases">
        <title>Sequencing analysis of Arabis hirsuta chloroplast DNA.</title>
        <authorList>
            <person name="Hosouchi T."/>
            <person name="Tsuruoka H."/>
            <person name="Kotani H."/>
        </authorList>
    </citation>
    <scope>NUCLEOTIDE SEQUENCE [LARGE SCALE GENOMIC DNA]</scope>
    <source>
        <strain>JO23</strain>
    </source>
</reference>
<sequence>MPIGVPKVPFRSPGEGDTSWVDIYNRLYRERLFFLGQEVDTEISNQLISLMIYLSIEKDTKDLYLFINSPGGWVISGMAIYDTMQFVRPDVQTIGMGLAASIASFILVGGAITKRIAFPHARVMIHQPASSFYEAQTGEFILEAEELLKIRETITRVYVQRTGKPIWVVSEDMERDVFMSATEAQAHGIVDLVAVQ</sequence>
<dbReference type="EC" id="3.4.21.92" evidence="1"/>
<dbReference type="EMBL" id="AP009369">
    <property type="protein sequence ID" value="BAF50048.1"/>
    <property type="molecule type" value="Genomic_DNA"/>
</dbReference>
<dbReference type="RefSeq" id="YP_001123224.1">
    <property type="nucleotide sequence ID" value="NC_009268.1"/>
</dbReference>
<dbReference type="SMR" id="A4QK43"/>
<dbReference type="MEROPS" id="S14.002"/>
<dbReference type="GeneID" id="4962562"/>
<dbReference type="GO" id="GO:0009570">
    <property type="term" value="C:chloroplast stroma"/>
    <property type="evidence" value="ECO:0007669"/>
    <property type="project" value="UniProtKB-SubCell"/>
</dbReference>
<dbReference type="GO" id="GO:0009368">
    <property type="term" value="C:endopeptidase Clp complex"/>
    <property type="evidence" value="ECO:0007669"/>
    <property type="project" value="TreeGrafter"/>
</dbReference>
<dbReference type="GO" id="GO:0004176">
    <property type="term" value="F:ATP-dependent peptidase activity"/>
    <property type="evidence" value="ECO:0007669"/>
    <property type="project" value="InterPro"/>
</dbReference>
<dbReference type="GO" id="GO:0051117">
    <property type="term" value="F:ATPase binding"/>
    <property type="evidence" value="ECO:0007669"/>
    <property type="project" value="TreeGrafter"/>
</dbReference>
<dbReference type="GO" id="GO:0004252">
    <property type="term" value="F:serine-type endopeptidase activity"/>
    <property type="evidence" value="ECO:0007669"/>
    <property type="project" value="UniProtKB-UniRule"/>
</dbReference>
<dbReference type="GO" id="GO:0006515">
    <property type="term" value="P:protein quality control for misfolded or incompletely synthesized proteins"/>
    <property type="evidence" value="ECO:0007669"/>
    <property type="project" value="TreeGrafter"/>
</dbReference>
<dbReference type="CDD" id="cd07017">
    <property type="entry name" value="S14_ClpP_2"/>
    <property type="match status" value="1"/>
</dbReference>
<dbReference type="FunFam" id="3.90.226.10:FF:000006">
    <property type="entry name" value="ATP-dependent Clp protease proteolytic subunit"/>
    <property type="match status" value="1"/>
</dbReference>
<dbReference type="Gene3D" id="3.90.226.10">
    <property type="entry name" value="2-enoyl-CoA Hydratase, Chain A, domain 1"/>
    <property type="match status" value="1"/>
</dbReference>
<dbReference type="HAMAP" id="MF_00444">
    <property type="entry name" value="ClpP"/>
    <property type="match status" value="1"/>
</dbReference>
<dbReference type="InterPro" id="IPR001907">
    <property type="entry name" value="ClpP"/>
</dbReference>
<dbReference type="InterPro" id="IPR029045">
    <property type="entry name" value="ClpP/crotonase-like_dom_sf"/>
</dbReference>
<dbReference type="InterPro" id="IPR023562">
    <property type="entry name" value="ClpP/TepA"/>
</dbReference>
<dbReference type="InterPro" id="IPR033135">
    <property type="entry name" value="ClpP_His_AS"/>
</dbReference>
<dbReference type="PANTHER" id="PTHR10381">
    <property type="entry name" value="ATP-DEPENDENT CLP PROTEASE PROTEOLYTIC SUBUNIT"/>
    <property type="match status" value="1"/>
</dbReference>
<dbReference type="PANTHER" id="PTHR10381:SF15">
    <property type="entry name" value="CHLOROPLASTIC ATP-DEPENDENT CLP PROTEASE PROTEOLYTIC SUBUNIT 1"/>
    <property type="match status" value="1"/>
</dbReference>
<dbReference type="Pfam" id="PF00574">
    <property type="entry name" value="CLP_protease"/>
    <property type="match status" value="1"/>
</dbReference>
<dbReference type="PRINTS" id="PR00127">
    <property type="entry name" value="CLPPROTEASEP"/>
</dbReference>
<dbReference type="SUPFAM" id="SSF52096">
    <property type="entry name" value="ClpP/crotonase"/>
    <property type="match status" value="1"/>
</dbReference>
<dbReference type="PROSITE" id="PS00382">
    <property type="entry name" value="CLP_PROTEASE_HIS"/>
    <property type="match status" value="1"/>
</dbReference>
<organism>
    <name type="scientific">Arabis hirsuta</name>
    <name type="common">Hairy rock-cress</name>
    <name type="synonym">Turritis hirsuta</name>
    <dbReference type="NCBI Taxonomy" id="78191"/>
    <lineage>
        <taxon>Eukaryota</taxon>
        <taxon>Viridiplantae</taxon>
        <taxon>Streptophyta</taxon>
        <taxon>Embryophyta</taxon>
        <taxon>Tracheophyta</taxon>
        <taxon>Spermatophyta</taxon>
        <taxon>Magnoliopsida</taxon>
        <taxon>eudicotyledons</taxon>
        <taxon>Gunneridae</taxon>
        <taxon>Pentapetalae</taxon>
        <taxon>rosids</taxon>
        <taxon>malvids</taxon>
        <taxon>Brassicales</taxon>
        <taxon>Brassicaceae</taxon>
        <taxon>Arabideae</taxon>
        <taxon>Arabis</taxon>
    </lineage>
</organism>
<accession>A4QK43</accession>
<feature type="chain" id="PRO_0000309289" description="ATP-dependent Clp protease proteolytic subunit">
    <location>
        <begin position="1"/>
        <end position="196"/>
    </location>
</feature>
<feature type="active site" description="Nucleophile" evidence="1">
    <location>
        <position position="101"/>
    </location>
</feature>
<feature type="active site" evidence="1">
    <location>
        <position position="126"/>
    </location>
</feature>
<evidence type="ECO:0000255" key="1">
    <source>
        <dbReference type="HAMAP-Rule" id="MF_00444"/>
    </source>
</evidence>
<keyword id="KW-0150">Chloroplast</keyword>
<keyword id="KW-0378">Hydrolase</keyword>
<keyword id="KW-0934">Plastid</keyword>
<keyword id="KW-0645">Protease</keyword>
<keyword id="KW-0720">Serine protease</keyword>
<name>CLPP_ARAHI</name>
<protein>
    <recommendedName>
        <fullName evidence="1">ATP-dependent Clp protease proteolytic subunit</fullName>
        <ecNumber evidence="1">3.4.21.92</ecNumber>
    </recommendedName>
    <alternativeName>
        <fullName evidence="1">Endopeptidase Clp</fullName>
    </alternativeName>
</protein>
<comment type="function">
    <text evidence="1">Cleaves peptides in various proteins in a process that requires ATP hydrolysis. Has a chymotrypsin-like activity. Plays a major role in the degradation of misfolded proteins.</text>
</comment>
<comment type="catalytic activity">
    <reaction evidence="1">
        <text>Hydrolysis of proteins to small peptides in the presence of ATP and magnesium. alpha-casein is the usual test substrate. In the absence of ATP, only oligopeptides shorter than five residues are hydrolyzed (such as succinyl-Leu-Tyr-|-NHMec, and Leu-Tyr-Leu-|-Tyr-Trp, in which cleavage of the -Tyr-|-Leu- and -Tyr-|-Trp bonds also occurs).</text>
        <dbReference type="EC" id="3.4.21.92"/>
    </reaction>
</comment>
<comment type="subunit">
    <text>Component of the chloroplastic Clp protease core complex.</text>
</comment>
<comment type="subcellular location">
    <subcellularLocation>
        <location evidence="1">Plastid</location>
        <location evidence="1">Chloroplast stroma</location>
    </subcellularLocation>
</comment>
<comment type="similarity">
    <text evidence="1">Belongs to the peptidase S14 family.</text>
</comment>